<name>ORML3_AILME</name>
<comment type="function">
    <text evidence="1">Plays an essential role in the homeostatic regulation of sphingolipid de novo biosynthesis by modulating the activity of the serine palmitoyltransferase (SPT) in response to ceramide levels. When complexed to SPT, the binding of ceramides to its N-terminus stabilizes a conformation that block SPT substrate entry, hence preventing SPT catalytic activity. Through this mechanism, maintains ceramide levels at sufficient concentrations for the production of complex sphingolipids, but which prevents the accumulation of ceramides to levels that trigger apoptosis.</text>
</comment>
<comment type="subunit">
    <text evidence="1">Ceramide-sensitive subunit of the serine palmitoyltransferase (SPT) complex, which is also composed of SPTLC1, SPTLC2/3 and SPTSSA/B.</text>
</comment>
<comment type="subcellular location">
    <subcellularLocation>
        <location evidence="1">Endoplasmic reticulum membrane</location>
        <topology evidence="1">Multi-pass membrane protein</topology>
    </subcellularLocation>
</comment>
<comment type="domain">
    <text evidence="1">Ceramides bind to ORMDL3 N-terminus and stabilize it in a conformation that physically restricts the accessibility of the substrates to their binding sites in the serine palmitoyltransferase (SPT) complex, hence inhibiting SPT catalytic activity. In the absence of ceramides, the N-terminus is flexible and permits substrate binding, thus liberating SPT from inhibition.</text>
</comment>
<comment type="PTM">
    <text evidence="1">When hydroxylated at Pro-137, ubiquitinated via 'Lys-48'-linkage, leading to proteasomal degradation. In endothelial cells, ORMDL3 proteasomal degradation is controlled by the sphingosine 1-phosphate receptor signaling pathway.</text>
</comment>
<comment type="similarity">
    <text evidence="3">Belongs to the ORM family.</text>
</comment>
<sequence>MNVGTAHSEVNPNTRVMNSRGIWLSYVLAIGLLHVVLLSIPFVSVPVVWTLTNLIHNTGMYIFLHTVKGTPFETPDQGKARLLTHWEQMDYGVQFTASRKFLTITPIVLYFLTSFYTKYDQIHFVLNTVSLMSVLIPKLPQLHGVRIFGINKY</sequence>
<feature type="chain" id="PRO_0000394251" description="ORM1-like protein 3">
    <location>
        <begin position="1"/>
        <end position="153"/>
    </location>
</feature>
<feature type="topological domain" description="Cytoplasmic" evidence="1 2">
    <location>
        <begin position="1"/>
        <end position="21"/>
    </location>
</feature>
<feature type="transmembrane region" description="Helical" evidence="1 2">
    <location>
        <begin position="22"/>
        <end position="42"/>
    </location>
</feature>
<feature type="transmembrane region" description="Helical" evidence="1 2">
    <location>
        <begin position="43"/>
        <end position="63"/>
    </location>
</feature>
<feature type="topological domain" description="Cytoplasmic" evidence="1 2">
    <location>
        <begin position="64"/>
        <end position="94"/>
    </location>
</feature>
<feature type="transmembrane region" description="Helical" evidence="1 2">
    <location>
        <begin position="95"/>
        <end position="117"/>
    </location>
</feature>
<feature type="topological domain" description="Extracellular" evidence="1 2">
    <location>
        <begin position="118"/>
        <end position="121"/>
    </location>
</feature>
<feature type="transmembrane region" description="Helical" evidence="1 2">
    <location>
        <begin position="122"/>
        <end position="142"/>
    </location>
</feature>
<feature type="topological domain" description="Cytoplasmic" evidence="1 2">
    <location>
        <begin position="143"/>
        <end position="153"/>
    </location>
</feature>
<feature type="region of interest" description="Important for ceramide level-sensing" evidence="1">
    <location>
        <begin position="1"/>
        <end position="17"/>
    </location>
</feature>
<feature type="modified residue" description="Hydroxyproline" evidence="1">
    <location>
        <position position="137"/>
    </location>
</feature>
<protein>
    <recommendedName>
        <fullName>ORM1-like protein 3</fullName>
    </recommendedName>
</protein>
<proteinExistence type="inferred from homology"/>
<gene>
    <name type="primary">ORMDL3</name>
    <name type="ORF">PANDA_019568</name>
</gene>
<evidence type="ECO:0000250" key="1">
    <source>
        <dbReference type="UniProtKB" id="Q8N138"/>
    </source>
</evidence>
<evidence type="ECO:0000255" key="2"/>
<evidence type="ECO:0000305" key="3"/>
<reference key="1">
    <citation type="journal article" date="2010" name="Nature">
        <title>The sequence and de novo assembly of the giant panda genome.</title>
        <authorList>
            <person name="Li R."/>
            <person name="Fan W."/>
            <person name="Tian G."/>
            <person name="Zhu H."/>
            <person name="He L."/>
            <person name="Cai J."/>
            <person name="Huang Q."/>
            <person name="Cai Q."/>
            <person name="Li B."/>
            <person name="Bai Y."/>
            <person name="Zhang Z."/>
            <person name="Zhang Y."/>
            <person name="Wang W."/>
            <person name="Li J."/>
            <person name="Wei F."/>
            <person name="Li H."/>
            <person name="Jian M."/>
            <person name="Li J."/>
            <person name="Zhang Z."/>
            <person name="Nielsen R."/>
            <person name="Li D."/>
            <person name="Gu W."/>
            <person name="Yang Z."/>
            <person name="Xuan Z."/>
            <person name="Ryder O.A."/>
            <person name="Leung F.C."/>
            <person name="Zhou Y."/>
            <person name="Cao J."/>
            <person name="Sun X."/>
            <person name="Fu Y."/>
            <person name="Fang X."/>
            <person name="Guo X."/>
            <person name="Wang B."/>
            <person name="Hou R."/>
            <person name="Shen F."/>
            <person name="Mu B."/>
            <person name="Ni P."/>
            <person name="Lin R."/>
            <person name="Qian W."/>
            <person name="Wang G."/>
            <person name="Yu C."/>
            <person name="Nie W."/>
            <person name="Wang J."/>
            <person name="Wu Z."/>
            <person name="Liang H."/>
            <person name="Min J."/>
            <person name="Wu Q."/>
            <person name="Cheng S."/>
            <person name="Ruan J."/>
            <person name="Wang M."/>
            <person name="Shi Z."/>
            <person name="Wen M."/>
            <person name="Liu B."/>
            <person name="Ren X."/>
            <person name="Zheng H."/>
            <person name="Dong D."/>
            <person name="Cook K."/>
            <person name="Shan G."/>
            <person name="Zhang H."/>
            <person name="Kosiol C."/>
            <person name="Xie X."/>
            <person name="Lu Z."/>
            <person name="Zheng H."/>
            <person name="Li Y."/>
            <person name="Steiner C.C."/>
            <person name="Lam T.T."/>
            <person name="Lin S."/>
            <person name="Zhang Q."/>
            <person name="Li G."/>
            <person name="Tian J."/>
            <person name="Gong T."/>
            <person name="Liu H."/>
            <person name="Zhang D."/>
            <person name="Fang L."/>
            <person name="Ye C."/>
            <person name="Zhang J."/>
            <person name="Hu W."/>
            <person name="Xu A."/>
            <person name="Ren Y."/>
            <person name="Zhang G."/>
            <person name="Bruford M.W."/>
            <person name="Li Q."/>
            <person name="Ma L."/>
            <person name="Guo Y."/>
            <person name="An N."/>
            <person name="Hu Y."/>
            <person name="Zheng Y."/>
            <person name="Shi Y."/>
            <person name="Li Z."/>
            <person name="Liu Q."/>
            <person name="Chen Y."/>
            <person name="Zhao J."/>
            <person name="Qu N."/>
            <person name="Zhao S."/>
            <person name="Tian F."/>
            <person name="Wang X."/>
            <person name="Wang H."/>
            <person name="Xu L."/>
            <person name="Liu X."/>
            <person name="Vinar T."/>
            <person name="Wang Y."/>
            <person name="Lam T.W."/>
            <person name="Yiu S.M."/>
            <person name="Liu S."/>
            <person name="Zhang H."/>
            <person name="Li D."/>
            <person name="Huang Y."/>
            <person name="Wang X."/>
            <person name="Yang G."/>
            <person name="Jiang Z."/>
            <person name="Wang J."/>
            <person name="Qin N."/>
            <person name="Li L."/>
            <person name="Li J."/>
            <person name="Bolund L."/>
            <person name="Kristiansen K."/>
            <person name="Wong G.K."/>
            <person name="Olson M."/>
            <person name="Zhang X."/>
            <person name="Li S."/>
            <person name="Yang H."/>
            <person name="Wang J."/>
            <person name="Wang J."/>
        </authorList>
    </citation>
    <scope>NUCLEOTIDE SEQUENCE [LARGE SCALE GENOMIC DNA]</scope>
</reference>
<keyword id="KW-0256">Endoplasmic reticulum</keyword>
<keyword id="KW-0379">Hydroxylation</keyword>
<keyword id="KW-0472">Membrane</keyword>
<keyword id="KW-1185">Reference proteome</keyword>
<keyword id="KW-0812">Transmembrane</keyword>
<keyword id="KW-1133">Transmembrane helix</keyword>
<keyword id="KW-0832">Ubl conjugation</keyword>
<accession>D2I2F3</accession>
<dbReference type="EMBL" id="GL194160">
    <property type="protein sequence ID" value="EFB23385.1"/>
    <property type="molecule type" value="Genomic_DNA"/>
</dbReference>
<dbReference type="RefSeq" id="XP_011235675.1">
    <property type="nucleotide sequence ID" value="XM_011237373.2"/>
</dbReference>
<dbReference type="RefSeq" id="XP_011235676.1">
    <property type="nucleotide sequence ID" value="XM_011237374.3"/>
</dbReference>
<dbReference type="SMR" id="D2I2F3"/>
<dbReference type="STRING" id="9646.ENSAMEP00000010359"/>
<dbReference type="GeneID" id="100479284"/>
<dbReference type="KEGG" id="aml:100479284"/>
<dbReference type="CTD" id="94103"/>
<dbReference type="eggNOG" id="KOG3319">
    <property type="taxonomic scope" value="Eukaryota"/>
</dbReference>
<dbReference type="HOGENOM" id="CLU_072117_3_0_1"/>
<dbReference type="InParanoid" id="D2I2F3"/>
<dbReference type="OMA" id="WTAYILI"/>
<dbReference type="OrthoDB" id="1932233at2759"/>
<dbReference type="TreeFam" id="TF323369"/>
<dbReference type="Proteomes" id="UP000008912">
    <property type="component" value="Unassembled WGS sequence"/>
</dbReference>
<dbReference type="GO" id="GO:0005783">
    <property type="term" value="C:endoplasmic reticulum"/>
    <property type="evidence" value="ECO:0000250"/>
    <property type="project" value="UniProtKB"/>
</dbReference>
<dbReference type="GO" id="GO:0005789">
    <property type="term" value="C:endoplasmic reticulum membrane"/>
    <property type="evidence" value="ECO:0007669"/>
    <property type="project" value="UniProtKB-SubCell"/>
</dbReference>
<dbReference type="GO" id="GO:0017059">
    <property type="term" value="C:serine palmitoyltransferase complex"/>
    <property type="evidence" value="ECO:0000250"/>
    <property type="project" value="UniProtKB"/>
</dbReference>
<dbReference type="GO" id="GO:0006672">
    <property type="term" value="P:ceramide metabolic process"/>
    <property type="evidence" value="ECO:0000250"/>
    <property type="project" value="UniProtKB"/>
</dbReference>
<dbReference type="GO" id="GO:2000303">
    <property type="term" value="P:regulation of ceramide biosynthetic process"/>
    <property type="evidence" value="ECO:0007669"/>
    <property type="project" value="UniProtKB-ARBA"/>
</dbReference>
<dbReference type="InterPro" id="IPR007203">
    <property type="entry name" value="ORMDL"/>
</dbReference>
<dbReference type="PANTHER" id="PTHR12665">
    <property type="entry name" value="ORMDL PROTEINS"/>
    <property type="match status" value="1"/>
</dbReference>
<dbReference type="Pfam" id="PF04061">
    <property type="entry name" value="ORMDL"/>
    <property type="match status" value="1"/>
</dbReference>
<dbReference type="PIRSF" id="PIRSF018147">
    <property type="entry name" value="ORMDL"/>
    <property type="match status" value="1"/>
</dbReference>
<organism>
    <name type="scientific">Ailuropoda melanoleuca</name>
    <name type="common">Giant panda</name>
    <dbReference type="NCBI Taxonomy" id="9646"/>
    <lineage>
        <taxon>Eukaryota</taxon>
        <taxon>Metazoa</taxon>
        <taxon>Chordata</taxon>
        <taxon>Craniata</taxon>
        <taxon>Vertebrata</taxon>
        <taxon>Euteleostomi</taxon>
        <taxon>Mammalia</taxon>
        <taxon>Eutheria</taxon>
        <taxon>Laurasiatheria</taxon>
        <taxon>Carnivora</taxon>
        <taxon>Caniformia</taxon>
        <taxon>Ursidae</taxon>
        <taxon>Ailuropoda</taxon>
    </lineage>
</organism>